<dbReference type="EMBL" id="CP000964">
    <property type="protein sequence ID" value="ACI09227.1"/>
    <property type="molecule type" value="Genomic_DNA"/>
</dbReference>
<dbReference type="SMR" id="B5XQ72"/>
<dbReference type="KEGG" id="kpe:KPK_1976"/>
<dbReference type="HOGENOM" id="CLU_155118_1_0_6"/>
<dbReference type="BioCyc" id="KPNE507522:GI0B-1970-MONOMER"/>
<dbReference type="Proteomes" id="UP000001734">
    <property type="component" value="Chromosome"/>
</dbReference>
<dbReference type="Gene3D" id="3.10.510.20">
    <property type="entry name" value="YcgL domain"/>
    <property type="match status" value="1"/>
</dbReference>
<dbReference type="HAMAP" id="MF_01866">
    <property type="entry name" value="UPF0745"/>
    <property type="match status" value="1"/>
</dbReference>
<dbReference type="InterPro" id="IPR038068">
    <property type="entry name" value="YcgL-like_sf"/>
</dbReference>
<dbReference type="InterPro" id="IPR027354">
    <property type="entry name" value="YcgL_dom"/>
</dbReference>
<dbReference type="PANTHER" id="PTHR38109">
    <property type="entry name" value="PROTEIN YCGL"/>
    <property type="match status" value="1"/>
</dbReference>
<dbReference type="PANTHER" id="PTHR38109:SF1">
    <property type="entry name" value="PROTEIN YCGL"/>
    <property type="match status" value="1"/>
</dbReference>
<dbReference type="Pfam" id="PF05166">
    <property type="entry name" value="YcgL"/>
    <property type="match status" value="1"/>
</dbReference>
<dbReference type="SUPFAM" id="SSF160191">
    <property type="entry name" value="YcgL-like"/>
    <property type="match status" value="1"/>
</dbReference>
<dbReference type="PROSITE" id="PS51648">
    <property type="entry name" value="YCGL"/>
    <property type="match status" value="1"/>
</dbReference>
<accession>B5XQ72</accession>
<organism>
    <name type="scientific">Klebsiella pneumoniae (strain 342)</name>
    <dbReference type="NCBI Taxonomy" id="507522"/>
    <lineage>
        <taxon>Bacteria</taxon>
        <taxon>Pseudomonadati</taxon>
        <taxon>Pseudomonadota</taxon>
        <taxon>Gammaproteobacteria</taxon>
        <taxon>Enterobacterales</taxon>
        <taxon>Enterobacteriaceae</taxon>
        <taxon>Klebsiella/Raoultella group</taxon>
        <taxon>Klebsiella</taxon>
        <taxon>Klebsiella pneumoniae complex</taxon>
    </lineage>
</organism>
<evidence type="ECO:0000255" key="1">
    <source>
        <dbReference type="HAMAP-Rule" id="MF_01866"/>
    </source>
</evidence>
<feature type="chain" id="PRO_0000375316" description="YcgL domain-containing protein KPK_1976">
    <location>
        <begin position="1"/>
        <end position="93"/>
    </location>
</feature>
<feature type="domain" description="YcgL" evidence="1">
    <location>
        <begin position="1"/>
        <end position="85"/>
    </location>
</feature>
<protein>
    <recommendedName>
        <fullName evidence="1">YcgL domain-containing protein KPK_1976</fullName>
    </recommendedName>
</protein>
<gene>
    <name type="ordered locus">KPK_1976</name>
</gene>
<reference key="1">
    <citation type="journal article" date="2008" name="PLoS Genet.">
        <title>Complete genome sequence of the N2-fixing broad host range endophyte Klebsiella pneumoniae 342 and virulence predictions verified in mice.</title>
        <authorList>
            <person name="Fouts D.E."/>
            <person name="Tyler H.L."/>
            <person name="DeBoy R.T."/>
            <person name="Daugherty S."/>
            <person name="Ren Q."/>
            <person name="Badger J.H."/>
            <person name="Durkin A.S."/>
            <person name="Huot H."/>
            <person name="Shrivastava S."/>
            <person name="Kothari S."/>
            <person name="Dodson R.J."/>
            <person name="Mohamoud Y."/>
            <person name="Khouri H."/>
            <person name="Roesch L.F.W."/>
            <person name="Krogfelt K.A."/>
            <person name="Struve C."/>
            <person name="Triplett E.W."/>
            <person name="Methe B.A."/>
        </authorList>
    </citation>
    <scope>NUCLEOTIDE SEQUENCE [LARGE SCALE GENOMIC DNA]</scope>
    <source>
        <strain>342</strain>
    </source>
</reference>
<sequence length="93" mass="10793">MFCVIYRSTKREQTYLYVEKKDDFSRVPDELMRGFGTPQMAMLLPLDGRKKLVNADLEKVKQALSEQGYYLQLPPPSENLLKKHLAEQGKQSD</sequence>
<proteinExistence type="inferred from homology"/>
<name>Y1976_KLEP3</name>